<keyword id="KW-0145">Chemotaxis</keyword>
<keyword id="KW-0489">Methyltransferase</keyword>
<keyword id="KW-1185">Reference proteome</keyword>
<keyword id="KW-0949">S-adenosyl-L-methionine</keyword>
<keyword id="KW-0808">Transferase</keyword>
<reference key="1">
    <citation type="journal article" date="2002" name="Environ. Microbiol.">
        <title>Complete genome sequence and comparative analysis of the metabolically versatile Pseudomonas putida KT2440.</title>
        <authorList>
            <person name="Nelson K.E."/>
            <person name="Weinel C."/>
            <person name="Paulsen I.T."/>
            <person name="Dodson R.J."/>
            <person name="Hilbert H."/>
            <person name="Martins dos Santos V.A.P."/>
            <person name="Fouts D.E."/>
            <person name="Gill S.R."/>
            <person name="Pop M."/>
            <person name="Holmes M."/>
            <person name="Brinkac L.M."/>
            <person name="Beanan M.J."/>
            <person name="DeBoy R.T."/>
            <person name="Daugherty S.C."/>
            <person name="Kolonay J.F."/>
            <person name="Madupu R."/>
            <person name="Nelson W.C."/>
            <person name="White O."/>
            <person name="Peterson J.D."/>
            <person name="Khouri H.M."/>
            <person name="Hance I."/>
            <person name="Chris Lee P."/>
            <person name="Holtzapple E.K."/>
            <person name="Scanlan D."/>
            <person name="Tran K."/>
            <person name="Moazzez A."/>
            <person name="Utterback T.R."/>
            <person name="Rizzo M."/>
            <person name="Lee K."/>
            <person name="Kosack D."/>
            <person name="Moestl D."/>
            <person name="Wedler H."/>
            <person name="Lauber J."/>
            <person name="Stjepandic D."/>
            <person name="Hoheisel J."/>
            <person name="Straetz M."/>
            <person name="Heim S."/>
            <person name="Kiewitz C."/>
            <person name="Eisen J.A."/>
            <person name="Timmis K.N."/>
            <person name="Duesterhoeft A."/>
            <person name="Tuemmler B."/>
            <person name="Fraser C.M."/>
        </authorList>
    </citation>
    <scope>NUCLEOTIDE SEQUENCE [LARGE SCALE GENOMIC DNA]</scope>
    <source>
        <strain>ATCC 47054 / DSM 6125 / CFBP 8728 / NCIMB 11950 / KT2440</strain>
    </source>
</reference>
<reference key="2">
    <citation type="journal article" date="2013" name="J. Biol. Chem.">
        <title>High specificity in CheR methyltransferase function: CheR2 of Pseudomonas putida is essential for chemotaxis, whereas CheR1 is involved in biofilm formation.</title>
        <authorList>
            <person name="Garcia-Fontana C."/>
            <person name="Reyes-Darias J.A."/>
            <person name="Munoz-Martinez F."/>
            <person name="Alfonso C."/>
            <person name="Morel B."/>
            <person name="Ramos J.L."/>
            <person name="Krell T."/>
        </authorList>
    </citation>
    <scope>FUNCTION</scope>
    <scope>SUBUNIT</scope>
    <scope>DISRUPTION PHENOTYPE</scope>
    <scope>GENE NAME</scope>
    <source>
        <strain>ATCC 47054 / DSM 6125 / CFBP 8728 / NCIMB 11950 / KT2440</strain>
    </source>
</reference>
<evidence type="ECO:0000250" key="1"/>
<evidence type="ECO:0000255" key="2">
    <source>
        <dbReference type="PROSITE-ProRule" id="PRU00051"/>
    </source>
</evidence>
<evidence type="ECO:0000269" key="3">
    <source>
    </source>
</evidence>
<organism>
    <name type="scientific">Pseudomonas putida (strain ATCC 47054 / DSM 6125 / CFBP 8728 / NCIMB 11950 / KT2440)</name>
    <dbReference type="NCBI Taxonomy" id="160488"/>
    <lineage>
        <taxon>Bacteria</taxon>
        <taxon>Pseudomonadati</taxon>
        <taxon>Pseudomonadota</taxon>
        <taxon>Gammaproteobacteria</taxon>
        <taxon>Pseudomonadales</taxon>
        <taxon>Pseudomonadaceae</taxon>
        <taxon>Pseudomonas</taxon>
    </lineage>
</organism>
<accession>Q88ER1</accession>
<dbReference type="EC" id="2.1.1.80"/>
<dbReference type="EMBL" id="AE015451">
    <property type="protein sequence ID" value="AAN69970.1"/>
    <property type="molecule type" value="Genomic_DNA"/>
</dbReference>
<dbReference type="RefSeq" id="NP_746506.1">
    <property type="nucleotide sequence ID" value="NC_002947.4"/>
</dbReference>
<dbReference type="SMR" id="Q88ER1"/>
<dbReference type="STRING" id="160488.PP_4392"/>
<dbReference type="PaxDb" id="160488-PP_4392"/>
<dbReference type="KEGG" id="ppu:PP_4392"/>
<dbReference type="PATRIC" id="fig|160488.4.peg.4667"/>
<dbReference type="eggNOG" id="COG1352">
    <property type="taxonomic scope" value="Bacteria"/>
</dbReference>
<dbReference type="HOGENOM" id="CLU_025854_0_2_6"/>
<dbReference type="OrthoDB" id="9816309at2"/>
<dbReference type="PhylomeDB" id="Q88ER1"/>
<dbReference type="BioCyc" id="PPUT160488:G1G01-4670-MONOMER"/>
<dbReference type="BRENDA" id="2.1.1.80">
    <property type="organism ID" value="5092"/>
</dbReference>
<dbReference type="Proteomes" id="UP000000556">
    <property type="component" value="Chromosome"/>
</dbReference>
<dbReference type="GO" id="GO:0008983">
    <property type="term" value="F:protein-glutamate O-methyltransferase activity"/>
    <property type="evidence" value="ECO:0007669"/>
    <property type="project" value="UniProtKB-EC"/>
</dbReference>
<dbReference type="GO" id="GO:0006935">
    <property type="term" value="P:chemotaxis"/>
    <property type="evidence" value="ECO:0007669"/>
    <property type="project" value="UniProtKB-KW"/>
</dbReference>
<dbReference type="GO" id="GO:0032259">
    <property type="term" value="P:methylation"/>
    <property type="evidence" value="ECO:0007669"/>
    <property type="project" value="UniProtKB-KW"/>
</dbReference>
<dbReference type="CDD" id="cd02440">
    <property type="entry name" value="AdoMet_MTases"/>
    <property type="match status" value="1"/>
</dbReference>
<dbReference type="Gene3D" id="1.10.155.10">
    <property type="entry name" value="Chemotaxis receptor methyltransferase CheR, N-terminal domain"/>
    <property type="match status" value="1"/>
</dbReference>
<dbReference type="Gene3D" id="3.40.50.150">
    <property type="entry name" value="Vaccinia Virus protein VP39"/>
    <property type="match status" value="1"/>
</dbReference>
<dbReference type="InterPro" id="IPR050903">
    <property type="entry name" value="Bact_Chemotaxis_MeTrfase"/>
</dbReference>
<dbReference type="InterPro" id="IPR026024">
    <property type="entry name" value="Chemotaxis_MeTrfase_CheR"/>
</dbReference>
<dbReference type="InterPro" id="IPR022642">
    <property type="entry name" value="CheR_C"/>
</dbReference>
<dbReference type="InterPro" id="IPR000780">
    <property type="entry name" value="CheR_MeTrfase"/>
</dbReference>
<dbReference type="InterPro" id="IPR022641">
    <property type="entry name" value="CheR_N"/>
</dbReference>
<dbReference type="InterPro" id="IPR036804">
    <property type="entry name" value="CheR_N_sf"/>
</dbReference>
<dbReference type="InterPro" id="IPR029063">
    <property type="entry name" value="SAM-dependent_MTases_sf"/>
</dbReference>
<dbReference type="PANTHER" id="PTHR24422">
    <property type="entry name" value="CHEMOTAXIS PROTEIN METHYLTRANSFERASE"/>
    <property type="match status" value="1"/>
</dbReference>
<dbReference type="PANTHER" id="PTHR24422:SF21">
    <property type="entry name" value="CHEMOTAXIS PROTEIN METHYLTRANSFERASE 1"/>
    <property type="match status" value="1"/>
</dbReference>
<dbReference type="Pfam" id="PF01739">
    <property type="entry name" value="CheR"/>
    <property type="match status" value="1"/>
</dbReference>
<dbReference type="Pfam" id="PF03705">
    <property type="entry name" value="CheR_N"/>
    <property type="match status" value="1"/>
</dbReference>
<dbReference type="PIRSF" id="PIRSF000410">
    <property type="entry name" value="CheR"/>
    <property type="match status" value="1"/>
</dbReference>
<dbReference type="PRINTS" id="PR00996">
    <property type="entry name" value="CHERMTFRASE"/>
</dbReference>
<dbReference type="SMART" id="SM00138">
    <property type="entry name" value="MeTrc"/>
    <property type="match status" value="1"/>
</dbReference>
<dbReference type="SUPFAM" id="SSF47757">
    <property type="entry name" value="Chemotaxis receptor methyltransferase CheR, N-terminal domain"/>
    <property type="match status" value="1"/>
</dbReference>
<dbReference type="SUPFAM" id="SSF53335">
    <property type="entry name" value="S-adenosyl-L-methionine-dependent methyltransferases"/>
    <property type="match status" value="1"/>
</dbReference>
<dbReference type="PROSITE" id="PS50123">
    <property type="entry name" value="CHER"/>
    <property type="match status" value="1"/>
</dbReference>
<proteinExistence type="evidence at protein level"/>
<sequence>MSTGNLDFEQFRVFLEKACGILLGENKQYLVSSRLNKLMEQQGIKSLGELVQRIQAQPRGGLREQVVDAMTTNETLWFRDTYPFEVLKNKVIPEFIRNNPGQRLRMWSAACSSGQEPYSISMAIDEFERSNLGQLKMGAQIVATDLSGTMLTNCKTGEYDSLAIARGLSQERLQRYFDPKGPGRWAVKPAIRSRVEFRSFNLLDSYASLGKFDIVFCRNVLIYFSAQVKKDILLRIHSTLKPGGYLFLGASEALNGLPDHYQMVQCSPGIIYQAK</sequence>
<protein>
    <recommendedName>
        <fullName>Chemotaxis protein methyltransferase Cher2</fullName>
        <ecNumber>2.1.1.80</ecNumber>
    </recommendedName>
</protein>
<name>CHER2_PSEPK</name>
<feature type="chain" id="PRO_0000424793" description="Chemotaxis protein methyltransferase Cher2">
    <location>
        <begin position="1"/>
        <end position="275"/>
    </location>
</feature>
<feature type="domain" description="CheR-type methyltransferase" evidence="2">
    <location>
        <begin position="1"/>
        <end position="275"/>
    </location>
</feature>
<feature type="binding site" evidence="1">
    <location>
        <position position="73"/>
    </location>
    <ligand>
        <name>S-adenosyl-L-methionine</name>
        <dbReference type="ChEBI" id="CHEBI:59789"/>
    </ligand>
</feature>
<feature type="binding site" evidence="1">
    <location>
        <position position="75"/>
    </location>
    <ligand>
        <name>S-adenosyl-L-methionine</name>
        <dbReference type="ChEBI" id="CHEBI:59789"/>
    </ligand>
</feature>
<feature type="binding site" evidence="1">
    <location>
        <position position="79"/>
    </location>
    <ligand>
        <name>S-adenosyl-L-methionine</name>
        <dbReference type="ChEBI" id="CHEBI:59789"/>
    </ligand>
</feature>
<feature type="binding site" evidence="1">
    <location>
        <position position="116"/>
    </location>
    <ligand>
        <name>S-adenosyl-L-methionine</name>
        <dbReference type="ChEBI" id="CHEBI:59789"/>
    </ligand>
</feature>
<feature type="binding site" evidence="1">
    <location>
        <position position="145"/>
    </location>
    <ligand>
        <name>S-adenosyl-L-methionine</name>
        <dbReference type="ChEBI" id="CHEBI:59789"/>
    </ligand>
</feature>
<feature type="binding site" evidence="1">
    <location>
        <begin position="201"/>
        <end position="202"/>
    </location>
    <ligand>
        <name>S-adenosyl-L-methionine</name>
        <dbReference type="ChEBI" id="CHEBI:59789"/>
    </ligand>
</feature>
<feature type="binding site" evidence="1">
    <location>
        <begin position="218"/>
        <end position="219"/>
    </location>
    <ligand>
        <name>S-adenosyl-L-methionine</name>
        <dbReference type="ChEBI" id="CHEBI:59789"/>
    </ligand>
</feature>
<comment type="function">
    <text evidence="3">Methylation of the membrane-bound methyl-accepting chemotaxis proteins (MCP) to form gamma-glutamyl methyl ester residues in MCP. Methylates the McpS chemotaxis receptor.</text>
</comment>
<comment type="catalytic activity">
    <reaction>
        <text>L-glutamyl-[protein] + S-adenosyl-L-methionine = [protein]-L-glutamate 5-O-methyl ester + S-adenosyl-L-homocysteine</text>
        <dbReference type="Rhea" id="RHEA:24452"/>
        <dbReference type="Rhea" id="RHEA-COMP:10208"/>
        <dbReference type="Rhea" id="RHEA-COMP:10311"/>
        <dbReference type="ChEBI" id="CHEBI:29973"/>
        <dbReference type="ChEBI" id="CHEBI:57856"/>
        <dbReference type="ChEBI" id="CHEBI:59789"/>
        <dbReference type="ChEBI" id="CHEBI:82795"/>
        <dbReference type="EC" id="2.1.1.80"/>
    </reaction>
</comment>
<comment type="subunit">
    <text evidence="3">Monomer.</text>
</comment>
<comment type="disruption phenotype">
    <text evidence="3">Mutants are deficient in chemotaxis toward malate and casamino acids. Mutation does not affect biofilm formation.</text>
</comment>
<gene>
    <name type="primary">cheR2</name>
    <name type="ordered locus">PP_4392</name>
</gene>